<protein>
    <recommendedName>
        <fullName evidence="1">GTPase Der</fullName>
    </recommendedName>
    <alternativeName>
        <fullName evidence="1">GTP-binding protein EngA</fullName>
    </alternativeName>
</protein>
<comment type="function">
    <text evidence="1">GTPase that plays an essential role in the late steps of ribosome biogenesis.</text>
</comment>
<comment type="subunit">
    <text evidence="1">Associates with the 50S ribosomal subunit.</text>
</comment>
<comment type="similarity">
    <text evidence="1">Belongs to the TRAFAC class TrmE-Era-EngA-EngB-Septin-like GTPase superfamily. EngA (Der) GTPase family.</text>
</comment>
<accession>O25505</accession>
<name>DER_HELPY</name>
<sequence>MNTSHKTLKTIAILGQPNVGKSSLFNRLARERIAITSDFAGTTRDINKRKIALNGHEVELLDTGGMAKDALLSKEIKALNLKAAQMSDLILYVVDGKSIPSDEDLKLFREVFKINPNCFLVINKIDNDKEKERAYAFSSFGMPKSFNISVSHNRGISALIDAVLSALDLNQIIEQDLDADILESLETPNNALEEEIIQVGIIGRVNVGKSSLLNALTKKERSLVSSVAGTTIDPIDETILIGDQKICFVDTAGIRHRGKILGIEKYALERTQKALEKSHIALLVLDVSAPFVELDEKISSLADKHSLGIILVLNKWDIRYAPYEEIIATLKRKFRFLEYAPVITTSCLKARHIDEIKHKIIEVYECFSKRIPTSLLNSVINQATQKHPLPSDGGKLVKVYYATQFATKPPQISLIMNRPKALHFSYKRYLINTLRKEFNFLGTPLILNAKDKKSAQQN</sequence>
<keyword id="KW-0342">GTP-binding</keyword>
<keyword id="KW-0547">Nucleotide-binding</keyword>
<keyword id="KW-1185">Reference proteome</keyword>
<keyword id="KW-0677">Repeat</keyword>
<keyword id="KW-0690">Ribosome biogenesis</keyword>
<reference key="1">
    <citation type="journal article" date="1997" name="Nature">
        <title>The complete genome sequence of the gastric pathogen Helicobacter pylori.</title>
        <authorList>
            <person name="Tomb J.-F."/>
            <person name="White O."/>
            <person name="Kerlavage A.R."/>
            <person name="Clayton R.A."/>
            <person name="Sutton G.G."/>
            <person name="Fleischmann R.D."/>
            <person name="Ketchum K.A."/>
            <person name="Klenk H.-P."/>
            <person name="Gill S.R."/>
            <person name="Dougherty B.A."/>
            <person name="Nelson K.E."/>
            <person name="Quackenbush J."/>
            <person name="Zhou L."/>
            <person name="Kirkness E.F."/>
            <person name="Peterson S.N."/>
            <person name="Loftus B.J."/>
            <person name="Richardson D.L."/>
            <person name="Dodson R.J."/>
            <person name="Khalak H.G."/>
            <person name="Glodek A."/>
            <person name="McKenney K."/>
            <person name="FitzGerald L.M."/>
            <person name="Lee N."/>
            <person name="Adams M.D."/>
            <person name="Hickey E.K."/>
            <person name="Berg D.E."/>
            <person name="Gocayne J.D."/>
            <person name="Utterback T.R."/>
            <person name="Peterson J.D."/>
            <person name="Kelley J.M."/>
            <person name="Cotton M.D."/>
            <person name="Weidman J.F."/>
            <person name="Fujii C."/>
            <person name="Bowman C."/>
            <person name="Watthey L."/>
            <person name="Wallin E."/>
            <person name="Hayes W.S."/>
            <person name="Borodovsky M."/>
            <person name="Karp P.D."/>
            <person name="Smith H.O."/>
            <person name="Fraser C.M."/>
            <person name="Venter J.C."/>
        </authorList>
    </citation>
    <scope>NUCLEOTIDE SEQUENCE [LARGE SCALE GENOMIC DNA]</scope>
    <source>
        <strain>ATCC 700392 / 26695</strain>
    </source>
</reference>
<feature type="chain" id="PRO_0000179000" description="GTPase Der">
    <location>
        <begin position="1"/>
        <end position="458"/>
    </location>
</feature>
<feature type="domain" description="EngA-type G 1">
    <location>
        <begin position="9"/>
        <end position="171"/>
    </location>
</feature>
<feature type="domain" description="EngA-type G 2">
    <location>
        <begin position="197"/>
        <end position="368"/>
    </location>
</feature>
<feature type="domain" description="KH-like" evidence="1">
    <location>
        <begin position="369"/>
        <end position="453"/>
    </location>
</feature>
<feature type="binding site" evidence="1">
    <location>
        <begin position="15"/>
        <end position="22"/>
    </location>
    <ligand>
        <name>GTP</name>
        <dbReference type="ChEBI" id="CHEBI:37565"/>
        <label>1</label>
    </ligand>
</feature>
<feature type="binding site" evidence="1">
    <location>
        <begin position="62"/>
        <end position="66"/>
    </location>
    <ligand>
        <name>GTP</name>
        <dbReference type="ChEBI" id="CHEBI:37565"/>
        <label>1</label>
    </ligand>
</feature>
<feature type="binding site" evidence="1">
    <location>
        <begin position="123"/>
        <end position="126"/>
    </location>
    <ligand>
        <name>GTP</name>
        <dbReference type="ChEBI" id="CHEBI:37565"/>
        <label>1</label>
    </ligand>
</feature>
<feature type="binding site" evidence="1">
    <location>
        <begin position="203"/>
        <end position="210"/>
    </location>
    <ligand>
        <name>GTP</name>
        <dbReference type="ChEBI" id="CHEBI:37565"/>
        <label>2</label>
    </ligand>
</feature>
<feature type="binding site" evidence="1">
    <location>
        <begin position="250"/>
        <end position="254"/>
    </location>
    <ligand>
        <name>GTP</name>
        <dbReference type="ChEBI" id="CHEBI:37565"/>
        <label>2</label>
    </ligand>
</feature>
<feature type="binding site" evidence="1">
    <location>
        <begin position="314"/>
        <end position="317"/>
    </location>
    <ligand>
        <name>GTP</name>
        <dbReference type="ChEBI" id="CHEBI:37565"/>
        <label>2</label>
    </ligand>
</feature>
<proteinExistence type="inferred from homology"/>
<evidence type="ECO:0000255" key="1">
    <source>
        <dbReference type="HAMAP-Rule" id="MF_00195"/>
    </source>
</evidence>
<gene>
    <name evidence="1" type="primary">der</name>
    <name type="synonym">engA</name>
    <name type="ordered locus">HP_0834</name>
</gene>
<organism>
    <name type="scientific">Helicobacter pylori (strain ATCC 700392 / 26695)</name>
    <name type="common">Campylobacter pylori</name>
    <dbReference type="NCBI Taxonomy" id="85962"/>
    <lineage>
        <taxon>Bacteria</taxon>
        <taxon>Pseudomonadati</taxon>
        <taxon>Campylobacterota</taxon>
        <taxon>Epsilonproteobacteria</taxon>
        <taxon>Campylobacterales</taxon>
        <taxon>Helicobacteraceae</taxon>
        <taxon>Helicobacter</taxon>
    </lineage>
</organism>
<dbReference type="EMBL" id="AE000511">
    <property type="protein sequence ID" value="AAD07883.1"/>
    <property type="molecule type" value="Genomic_DNA"/>
</dbReference>
<dbReference type="PIR" id="B64624">
    <property type="entry name" value="B64624"/>
</dbReference>
<dbReference type="RefSeq" id="NP_207627.1">
    <property type="nucleotide sequence ID" value="NC_000915.1"/>
</dbReference>
<dbReference type="RefSeq" id="WP_001097820.1">
    <property type="nucleotide sequence ID" value="NC_018939.1"/>
</dbReference>
<dbReference type="SMR" id="O25505"/>
<dbReference type="DIP" id="DIP-3386N"/>
<dbReference type="FunCoup" id="O25505">
    <property type="interactions" value="363"/>
</dbReference>
<dbReference type="IntAct" id="O25505">
    <property type="interactions" value="2"/>
</dbReference>
<dbReference type="MINT" id="O25505"/>
<dbReference type="STRING" id="85962.HP_0834"/>
<dbReference type="PaxDb" id="85962-C694_04275"/>
<dbReference type="EnsemblBacteria" id="AAD07883">
    <property type="protein sequence ID" value="AAD07883"/>
    <property type="gene ID" value="HP_0834"/>
</dbReference>
<dbReference type="KEGG" id="heo:C694_04275"/>
<dbReference type="KEGG" id="hpy:HP_0834"/>
<dbReference type="PATRIC" id="fig|85962.47.peg.889"/>
<dbReference type="eggNOG" id="COG1160">
    <property type="taxonomic scope" value="Bacteria"/>
</dbReference>
<dbReference type="InParanoid" id="O25505"/>
<dbReference type="OrthoDB" id="9805918at2"/>
<dbReference type="PhylomeDB" id="O25505"/>
<dbReference type="Proteomes" id="UP000000429">
    <property type="component" value="Chromosome"/>
</dbReference>
<dbReference type="GO" id="GO:0005525">
    <property type="term" value="F:GTP binding"/>
    <property type="evidence" value="ECO:0007669"/>
    <property type="project" value="UniProtKB-UniRule"/>
</dbReference>
<dbReference type="GO" id="GO:0043022">
    <property type="term" value="F:ribosome binding"/>
    <property type="evidence" value="ECO:0000318"/>
    <property type="project" value="GO_Central"/>
</dbReference>
<dbReference type="GO" id="GO:0042254">
    <property type="term" value="P:ribosome biogenesis"/>
    <property type="evidence" value="ECO:0007669"/>
    <property type="project" value="UniProtKB-KW"/>
</dbReference>
<dbReference type="CDD" id="cd01894">
    <property type="entry name" value="EngA1"/>
    <property type="match status" value="1"/>
</dbReference>
<dbReference type="CDD" id="cd01895">
    <property type="entry name" value="EngA2"/>
    <property type="match status" value="1"/>
</dbReference>
<dbReference type="FunFam" id="3.30.300.20:FF:000004">
    <property type="entry name" value="GTPase Der"/>
    <property type="match status" value="1"/>
</dbReference>
<dbReference type="FunFam" id="3.40.50.300:FF:002598">
    <property type="entry name" value="GTPase Der"/>
    <property type="match status" value="1"/>
</dbReference>
<dbReference type="FunFam" id="3.40.50.300:FF:000494">
    <property type="entry name" value="tRNA modification GTPase MnmE"/>
    <property type="match status" value="1"/>
</dbReference>
<dbReference type="Gene3D" id="3.30.300.20">
    <property type="match status" value="1"/>
</dbReference>
<dbReference type="Gene3D" id="3.40.50.300">
    <property type="entry name" value="P-loop containing nucleotide triphosphate hydrolases"/>
    <property type="match status" value="2"/>
</dbReference>
<dbReference type="HAMAP" id="MF_00195">
    <property type="entry name" value="GTPase_Der"/>
    <property type="match status" value="1"/>
</dbReference>
<dbReference type="InterPro" id="IPR031166">
    <property type="entry name" value="G_ENGA"/>
</dbReference>
<dbReference type="InterPro" id="IPR006073">
    <property type="entry name" value="GTP-bd"/>
</dbReference>
<dbReference type="InterPro" id="IPR016484">
    <property type="entry name" value="GTPase_Der"/>
</dbReference>
<dbReference type="InterPro" id="IPR032859">
    <property type="entry name" value="KH_dom-like"/>
</dbReference>
<dbReference type="InterPro" id="IPR015946">
    <property type="entry name" value="KH_dom-like_a/b"/>
</dbReference>
<dbReference type="InterPro" id="IPR027417">
    <property type="entry name" value="P-loop_NTPase"/>
</dbReference>
<dbReference type="InterPro" id="IPR005225">
    <property type="entry name" value="Small_GTP-bd"/>
</dbReference>
<dbReference type="NCBIfam" id="TIGR03594">
    <property type="entry name" value="GTPase_EngA"/>
    <property type="match status" value="1"/>
</dbReference>
<dbReference type="NCBIfam" id="TIGR00231">
    <property type="entry name" value="small_GTP"/>
    <property type="match status" value="2"/>
</dbReference>
<dbReference type="PANTHER" id="PTHR43834">
    <property type="entry name" value="GTPASE DER"/>
    <property type="match status" value="1"/>
</dbReference>
<dbReference type="PANTHER" id="PTHR43834:SF6">
    <property type="entry name" value="GTPASE DER"/>
    <property type="match status" value="1"/>
</dbReference>
<dbReference type="Pfam" id="PF14714">
    <property type="entry name" value="KH_dom-like"/>
    <property type="match status" value="1"/>
</dbReference>
<dbReference type="Pfam" id="PF01926">
    <property type="entry name" value="MMR_HSR1"/>
    <property type="match status" value="2"/>
</dbReference>
<dbReference type="PIRSF" id="PIRSF006485">
    <property type="entry name" value="GTP-binding_EngA"/>
    <property type="match status" value="1"/>
</dbReference>
<dbReference type="PRINTS" id="PR00326">
    <property type="entry name" value="GTP1OBG"/>
</dbReference>
<dbReference type="SUPFAM" id="SSF52540">
    <property type="entry name" value="P-loop containing nucleoside triphosphate hydrolases"/>
    <property type="match status" value="2"/>
</dbReference>
<dbReference type="PROSITE" id="PS51712">
    <property type="entry name" value="G_ENGA"/>
    <property type="match status" value="2"/>
</dbReference>